<sequence>MTIPEKPQGVIWTDAQWQSIYATGQDVLVAAAAGSGKTAVLVERIIQKILRDGIDVDRLLVVTFTNLSAREMKHRVDQRIQEASIADPANAHLKNQRIKIHQAQISTLHSFCLKLIQQHYDVLNIDPNFRTSSEAENILLLEQTIDEVIEQHYDILDPAFIELTEQLSSDRSDDQFRMIIKQLYFFSVANPNPTNWLDQLVTPYEEEAQQAQLIQLLTDLSKVFITAAYDALNKAYDLFSMMDSVDKHLAVIEDERRLMGRVLEGGFIDIPYLTGHEFGARLPNVTAKIKEANEMMVDALEDAKLQYKKYKSLIDKVKSDYFSREADDLKADMQQLAPRVKYLARIVKDVMSEFNRKKRSKNILDFSDYEHFALQILTNEDGSPSEIAESYRQHFQEILVDEYQDTNRVQEKILSCIKTGDEHNGNLFMVGDVKQSIYKFRQADPSLFIEKYQRFTIDGDGTGRRIDLSQNFRSRKEVLSTTNYIFKHMMDEQVGEVKYDEAAQLYYGAPYDESDHPVNLKVLVEADQEHSDLTGSEQEAHFIVEQVKDILEHQKVYDMKTGSYRSATYKDIVILERSFGQARNLQQAFKNEDIPFHVNSREGYFEQTEVRLVLSFLRAIDNPLQDIYLVGLMRSVIYQFKEDELAQIRILSPNDDYFYQSIVNYINDEAADAILVDKLKMFLSDIQSYQQYSKDHPVYQLIDKFYNDHYVIQYFSGLIGGRGRRANLYGLFNKAIEFENSSFRGLYQFIRFIDELIERGKDFGEENVVGPNDNVVRMMTIHSSKGLEFPFVIYSGLSKDFNKRDLKQPVILNQQFGLGMDYFDVDKEMAFPSLASVAYRAVAEKELVSEEMRLVYVALTRAKEQLYLIGRVKNDKSLLELEQLSISGEHIAVNERLTSPNPFHLIYSILSKHQSASIPDDLKFEKDIAQVEDSSRPNVNISIIYFEDVSTETILDNNEYRSVNQLETMQNGNEDVKAQIKHQLDYQYPYVNDTKKPSKQSVSELKRQYETEESGTSYERVRQYRIGFSTYERPKFLSEQGKRKANEIGTLMHTVMQHLPFKKERISEVELHQYIDGLIDKHIIEADAKKDIRMDEIMTFINSELYSIIAEAEQVYRELPFVVNQALVDQLPQGDEDVSIIQGMIDLIFVKDGVHYFVDYKTDAFNRRRGMTDEEIGTQLKNKYKIQMKYYQNTLQTILNKEVKGYLYFFKFGTLQL</sequence>
<keyword id="KW-0067">ATP-binding</keyword>
<keyword id="KW-0227">DNA damage</keyword>
<keyword id="KW-0234">DNA repair</keyword>
<keyword id="KW-0238">DNA-binding</keyword>
<keyword id="KW-0269">Exonuclease</keyword>
<keyword id="KW-0347">Helicase</keyword>
<keyword id="KW-0378">Hydrolase</keyword>
<keyword id="KW-0413">Isomerase</keyword>
<keyword id="KW-0540">Nuclease</keyword>
<keyword id="KW-0547">Nucleotide-binding</keyword>
<feature type="chain" id="PRO_0000379312" description="ATP-dependent helicase/nuclease subunit A">
    <location>
        <begin position="1"/>
        <end position="1217"/>
    </location>
</feature>
<feature type="domain" description="UvrD-like helicase ATP-binding" evidence="1">
    <location>
        <begin position="10"/>
        <end position="475"/>
    </location>
</feature>
<feature type="domain" description="UvrD-like helicase C-terminal" evidence="1">
    <location>
        <begin position="476"/>
        <end position="786"/>
    </location>
</feature>
<feature type="binding site" evidence="1">
    <location>
        <begin position="31"/>
        <end position="38"/>
    </location>
    <ligand>
        <name>ATP</name>
        <dbReference type="ChEBI" id="CHEBI:30616"/>
    </ligand>
</feature>
<proteinExistence type="inferred from homology"/>
<accession>Q6GAV9</accession>
<reference key="1">
    <citation type="journal article" date="2004" name="Proc. Natl. Acad. Sci. U.S.A.">
        <title>Complete genomes of two clinical Staphylococcus aureus strains: evidence for the rapid evolution of virulence and drug resistance.</title>
        <authorList>
            <person name="Holden M.T.G."/>
            <person name="Feil E.J."/>
            <person name="Lindsay J.A."/>
            <person name="Peacock S.J."/>
            <person name="Day N.P.J."/>
            <person name="Enright M.C."/>
            <person name="Foster T.J."/>
            <person name="Moore C.E."/>
            <person name="Hurst L."/>
            <person name="Atkin R."/>
            <person name="Barron A."/>
            <person name="Bason N."/>
            <person name="Bentley S.D."/>
            <person name="Chillingworth C."/>
            <person name="Chillingworth T."/>
            <person name="Churcher C."/>
            <person name="Clark L."/>
            <person name="Corton C."/>
            <person name="Cronin A."/>
            <person name="Doggett J."/>
            <person name="Dowd L."/>
            <person name="Feltwell T."/>
            <person name="Hance Z."/>
            <person name="Harris B."/>
            <person name="Hauser H."/>
            <person name="Holroyd S."/>
            <person name="Jagels K."/>
            <person name="James K.D."/>
            <person name="Lennard N."/>
            <person name="Line A."/>
            <person name="Mayes R."/>
            <person name="Moule S."/>
            <person name="Mungall K."/>
            <person name="Ormond D."/>
            <person name="Quail M.A."/>
            <person name="Rabbinowitsch E."/>
            <person name="Rutherford K.M."/>
            <person name="Sanders M."/>
            <person name="Sharp S."/>
            <person name="Simmonds M."/>
            <person name="Stevens K."/>
            <person name="Whitehead S."/>
            <person name="Barrell B.G."/>
            <person name="Spratt B.G."/>
            <person name="Parkhill J."/>
        </authorList>
    </citation>
    <scope>NUCLEOTIDE SEQUENCE [LARGE SCALE GENOMIC DNA]</scope>
    <source>
        <strain>MSSA476</strain>
    </source>
</reference>
<gene>
    <name evidence="1" type="primary">addA</name>
    <name type="ordered locus">SAS0837</name>
</gene>
<name>ADDA_STAAS</name>
<protein>
    <recommendedName>
        <fullName evidence="1">ATP-dependent helicase/nuclease subunit A</fullName>
        <ecNumber evidence="1">3.1.-.-</ecNumber>
        <ecNumber evidence="1">5.6.2.4</ecNumber>
    </recommendedName>
    <alternativeName>
        <fullName evidence="1">ATP-dependent helicase/nuclease AddA</fullName>
    </alternativeName>
    <alternativeName>
        <fullName evidence="1">DNA 3'-5' helicase AddA</fullName>
    </alternativeName>
</protein>
<evidence type="ECO:0000255" key="1">
    <source>
        <dbReference type="HAMAP-Rule" id="MF_01451"/>
    </source>
</evidence>
<dbReference type="EC" id="3.1.-.-" evidence="1"/>
<dbReference type="EC" id="5.6.2.4" evidence="1"/>
<dbReference type="EMBL" id="BX571857">
    <property type="protein sequence ID" value="CAG42612.1"/>
    <property type="molecule type" value="Genomic_DNA"/>
</dbReference>
<dbReference type="RefSeq" id="WP_000154931.1">
    <property type="nucleotide sequence ID" value="NC_002953.3"/>
</dbReference>
<dbReference type="SMR" id="Q6GAV9"/>
<dbReference type="KEGG" id="sas:SAS0837"/>
<dbReference type="HOGENOM" id="CLU_001114_3_1_9"/>
<dbReference type="GO" id="GO:0005829">
    <property type="term" value="C:cytosol"/>
    <property type="evidence" value="ECO:0007669"/>
    <property type="project" value="TreeGrafter"/>
</dbReference>
<dbReference type="GO" id="GO:0033202">
    <property type="term" value="C:DNA helicase complex"/>
    <property type="evidence" value="ECO:0007669"/>
    <property type="project" value="TreeGrafter"/>
</dbReference>
<dbReference type="GO" id="GO:0043138">
    <property type="term" value="F:3'-5' DNA helicase activity"/>
    <property type="evidence" value="ECO:0007669"/>
    <property type="project" value="UniProtKB-UniRule"/>
</dbReference>
<dbReference type="GO" id="GO:0008408">
    <property type="term" value="F:3'-5' exonuclease activity"/>
    <property type="evidence" value="ECO:0007669"/>
    <property type="project" value="UniProtKB-UniRule"/>
</dbReference>
<dbReference type="GO" id="GO:0005524">
    <property type="term" value="F:ATP binding"/>
    <property type="evidence" value="ECO:0007669"/>
    <property type="project" value="UniProtKB-UniRule"/>
</dbReference>
<dbReference type="GO" id="GO:0016887">
    <property type="term" value="F:ATP hydrolysis activity"/>
    <property type="evidence" value="ECO:0007669"/>
    <property type="project" value="RHEA"/>
</dbReference>
<dbReference type="GO" id="GO:0003690">
    <property type="term" value="F:double-stranded DNA binding"/>
    <property type="evidence" value="ECO:0007669"/>
    <property type="project" value="UniProtKB-UniRule"/>
</dbReference>
<dbReference type="GO" id="GO:0000724">
    <property type="term" value="P:double-strand break repair via homologous recombination"/>
    <property type="evidence" value="ECO:0007669"/>
    <property type="project" value="UniProtKB-UniRule"/>
</dbReference>
<dbReference type="CDD" id="cd17932">
    <property type="entry name" value="DEXQc_UvrD"/>
    <property type="match status" value="2"/>
</dbReference>
<dbReference type="FunFam" id="3.40.50.300:FF:001196">
    <property type="entry name" value="ATP-dependent helicase/nuclease subunit A"/>
    <property type="match status" value="1"/>
</dbReference>
<dbReference type="FunFam" id="3.40.50.300:FF:001715">
    <property type="entry name" value="ATP-dependent helicase/nuclease subunit A"/>
    <property type="match status" value="1"/>
</dbReference>
<dbReference type="Gene3D" id="3.90.320.10">
    <property type="match status" value="1"/>
</dbReference>
<dbReference type="Gene3D" id="3.40.50.300">
    <property type="entry name" value="P-loop containing nucleotide triphosphate hydrolases"/>
    <property type="match status" value="4"/>
</dbReference>
<dbReference type="Gene3D" id="1.10.486.10">
    <property type="entry name" value="PCRA, domain 4"/>
    <property type="match status" value="1"/>
</dbReference>
<dbReference type="HAMAP" id="MF_01451">
    <property type="entry name" value="AddA"/>
    <property type="match status" value="1"/>
</dbReference>
<dbReference type="InterPro" id="IPR014152">
    <property type="entry name" value="AddA"/>
</dbReference>
<dbReference type="InterPro" id="IPR014017">
    <property type="entry name" value="DNA_helicase_UvrD-like_C"/>
</dbReference>
<dbReference type="InterPro" id="IPR000212">
    <property type="entry name" value="DNA_helicase_UvrD/REP"/>
</dbReference>
<dbReference type="InterPro" id="IPR027417">
    <property type="entry name" value="P-loop_NTPase"/>
</dbReference>
<dbReference type="InterPro" id="IPR011604">
    <property type="entry name" value="PDDEXK-like_dom_sf"/>
</dbReference>
<dbReference type="InterPro" id="IPR038726">
    <property type="entry name" value="PDDEXK_AddAB-type"/>
</dbReference>
<dbReference type="InterPro" id="IPR011335">
    <property type="entry name" value="Restrct_endonuc-II-like"/>
</dbReference>
<dbReference type="InterPro" id="IPR014016">
    <property type="entry name" value="UvrD-like_ATP-bd"/>
</dbReference>
<dbReference type="NCBIfam" id="TIGR02785">
    <property type="entry name" value="addA_Gpos"/>
    <property type="match status" value="1"/>
</dbReference>
<dbReference type="PANTHER" id="PTHR11070:SF48">
    <property type="entry name" value="ATP-DEPENDENT HELICASE_NUCLEASE SUBUNIT A"/>
    <property type="match status" value="1"/>
</dbReference>
<dbReference type="PANTHER" id="PTHR11070">
    <property type="entry name" value="UVRD / RECB / PCRA DNA HELICASE FAMILY MEMBER"/>
    <property type="match status" value="1"/>
</dbReference>
<dbReference type="Pfam" id="PF12705">
    <property type="entry name" value="PDDEXK_1"/>
    <property type="match status" value="1"/>
</dbReference>
<dbReference type="Pfam" id="PF00580">
    <property type="entry name" value="UvrD-helicase"/>
    <property type="match status" value="1"/>
</dbReference>
<dbReference type="Pfam" id="PF13361">
    <property type="entry name" value="UvrD_C"/>
    <property type="match status" value="1"/>
</dbReference>
<dbReference type="SUPFAM" id="SSF52540">
    <property type="entry name" value="P-loop containing nucleoside triphosphate hydrolases"/>
    <property type="match status" value="1"/>
</dbReference>
<dbReference type="SUPFAM" id="SSF52980">
    <property type="entry name" value="Restriction endonuclease-like"/>
    <property type="match status" value="1"/>
</dbReference>
<dbReference type="PROSITE" id="PS51198">
    <property type="entry name" value="UVRD_HELICASE_ATP_BIND"/>
    <property type="match status" value="1"/>
</dbReference>
<dbReference type="PROSITE" id="PS51217">
    <property type="entry name" value="UVRD_HELICASE_CTER"/>
    <property type="match status" value="1"/>
</dbReference>
<comment type="function">
    <text evidence="1">The heterodimer acts as both an ATP-dependent DNA helicase and an ATP-dependent, dual-direction single-stranded exonuclease. Recognizes the chi site generating a DNA molecule suitable for the initiation of homologous recombination. The AddA nuclease domain is required for chi fragment generation; this subunit has the helicase and 3' -&gt; 5' nuclease activities.</text>
</comment>
<comment type="catalytic activity">
    <reaction evidence="1">
        <text>Couples ATP hydrolysis with the unwinding of duplex DNA by translocating in the 3'-5' direction.</text>
        <dbReference type="EC" id="5.6.2.4"/>
    </reaction>
</comment>
<comment type="catalytic activity">
    <reaction evidence="1">
        <text>ATP + H2O = ADP + phosphate + H(+)</text>
        <dbReference type="Rhea" id="RHEA:13065"/>
        <dbReference type="ChEBI" id="CHEBI:15377"/>
        <dbReference type="ChEBI" id="CHEBI:15378"/>
        <dbReference type="ChEBI" id="CHEBI:30616"/>
        <dbReference type="ChEBI" id="CHEBI:43474"/>
        <dbReference type="ChEBI" id="CHEBI:456216"/>
        <dbReference type="EC" id="5.6.2.4"/>
    </reaction>
</comment>
<comment type="cofactor">
    <cofactor evidence="1">
        <name>Mg(2+)</name>
        <dbReference type="ChEBI" id="CHEBI:18420"/>
    </cofactor>
</comment>
<comment type="subunit">
    <text evidence="1">Heterodimer of AddA and AddB/RexB.</text>
</comment>
<comment type="similarity">
    <text evidence="1">Belongs to the helicase family. AddA subfamily.</text>
</comment>
<organism>
    <name type="scientific">Staphylococcus aureus (strain MSSA476)</name>
    <dbReference type="NCBI Taxonomy" id="282459"/>
    <lineage>
        <taxon>Bacteria</taxon>
        <taxon>Bacillati</taxon>
        <taxon>Bacillota</taxon>
        <taxon>Bacilli</taxon>
        <taxon>Bacillales</taxon>
        <taxon>Staphylococcaceae</taxon>
        <taxon>Staphylococcus</taxon>
    </lineage>
</organism>